<reference key="1">
    <citation type="submission" date="2003-04" db="EMBL/GenBank/DDBJ databases">
        <title>Physical and functional connections between human Mediator complex and general transcription machinery.</title>
        <authorList>
            <person name="Furumoto T."/>
            <person name="Malik S."/>
            <person name="Hayashi K."/>
            <person name="Tanaka A."/>
            <person name="Ito M."/>
            <person name="Roeder R.G."/>
            <person name="Hanaoka F."/>
            <person name="Ohkuma Y."/>
        </authorList>
    </citation>
    <scope>NUCLEOTIDE SEQUENCE [MRNA]</scope>
    <source>
        <tissue>Lymphoma</tissue>
    </source>
</reference>
<reference key="2">
    <citation type="journal article" date="2004" name="Nat. Genet.">
        <title>Complete sequencing and characterization of 21,243 full-length human cDNAs.</title>
        <authorList>
            <person name="Ota T."/>
            <person name="Suzuki Y."/>
            <person name="Nishikawa T."/>
            <person name="Otsuki T."/>
            <person name="Sugiyama T."/>
            <person name="Irie R."/>
            <person name="Wakamatsu A."/>
            <person name="Hayashi K."/>
            <person name="Sato H."/>
            <person name="Nagai K."/>
            <person name="Kimura K."/>
            <person name="Makita H."/>
            <person name="Sekine M."/>
            <person name="Obayashi M."/>
            <person name="Nishi T."/>
            <person name="Shibahara T."/>
            <person name="Tanaka T."/>
            <person name="Ishii S."/>
            <person name="Yamamoto J."/>
            <person name="Saito K."/>
            <person name="Kawai Y."/>
            <person name="Isono Y."/>
            <person name="Nakamura Y."/>
            <person name="Nagahari K."/>
            <person name="Murakami K."/>
            <person name="Yasuda T."/>
            <person name="Iwayanagi T."/>
            <person name="Wagatsuma M."/>
            <person name="Shiratori A."/>
            <person name="Sudo H."/>
            <person name="Hosoiri T."/>
            <person name="Kaku Y."/>
            <person name="Kodaira H."/>
            <person name="Kondo H."/>
            <person name="Sugawara M."/>
            <person name="Takahashi M."/>
            <person name="Kanda K."/>
            <person name="Yokoi T."/>
            <person name="Furuya T."/>
            <person name="Kikkawa E."/>
            <person name="Omura Y."/>
            <person name="Abe K."/>
            <person name="Kamihara K."/>
            <person name="Katsuta N."/>
            <person name="Sato K."/>
            <person name="Tanikawa M."/>
            <person name="Yamazaki M."/>
            <person name="Ninomiya K."/>
            <person name="Ishibashi T."/>
            <person name="Yamashita H."/>
            <person name="Murakawa K."/>
            <person name="Fujimori K."/>
            <person name="Tanai H."/>
            <person name="Kimata M."/>
            <person name="Watanabe M."/>
            <person name="Hiraoka S."/>
            <person name="Chiba Y."/>
            <person name="Ishida S."/>
            <person name="Ono Y."/>
            <person name="Takiguchi S."/>
            <person name="Watanabe S."/>
            <person name="Yosida M."/>
            <person name="Hotuta T."/>
            <person name="Kusano J."/>
            <person name="Kanehori K."/>
            <person name="Takahashi-Fujii A."/>
            <person name="Hara H."/>
            <person name="Tanase T.-O."/>
            <person name="Nomura Y."/>
            <person name="Togiya S."/>
            <person name="Komai F."/>
            <person name="Hara R."/>
            <person name="Takeuchi K."/>
            <person name="Arita M."/>
            <person name="Imose N."/>
            <person name="Musashino K."/>
            <person name="Yuuki H."/>
            <person name="Oshima A."/>
            <person name="Sasaki N."/>
            <person name="Aotsuka S."/>
            <person name="Yoshikawa Y."/>
            <person name="Matsunawa H."/>
            <person name="Ichihara T."/>
            <person name="Shiohata N."/>
            <person name="Sano S."/>
            <person name="Moriya S."/>
            <person name="Momiyama H."/>
            <person name="Satoh N."/>
            <person name="Takami S."/>
            <person name="Terashima Y."/>
            <person name="Suzuki O."/>
            <person name="Nakagawa S."/>
            <person name="Senoh A."/>
            <person name="Mizoguchi H."/>
            <person name="Goto Y."/>
            <person name="Shimizu F."/>
            <person name="Wakebe H."/>
            <person name="Hishigaki H."/>
            <person name="Watanabe T."/>
            <person name="Sugiyama A."/>
            <person name="Takemoto M."/>
            <person name="Kawakami B."/>
            <person name="Yamazaki M."/>
            <person name="Watanabe K."/>
            <person name="Kumagai A."/>
            <person name="Itakura S."/>
            <person name="Fukuzumi Y."/>
            <person name="Fujimori Y."/>
            <person name="Komiyama M."/>
            <person name="Tashiro H."/>
            <person name="Tanigami A."/>
            <person name="Fujiwara T."/>
            <person name="Ono T."/>
            <person name="Yamada K."/>
            <person name="Fujii Y."/>
            <person name="Ozaki K."/>
            <person name="Hirao M."/>
            <person name="Ohmori Y."/>
            <person name="Kawabata A."/>
            <person name="Hikiji T."/>
            <person name="Kobatake N."/>
            <person name="Inagaki H."/>
            <person name="Ikema Y."/>
            <person name="Okamoto S."/>
            <person name="Okitani R."/>
            <person name="Kawakami T."/>
            <person name="Noguchi S."/>
            <person name="Itoh T."/>
            <person name="Shigeta K."/>
            <person name="Senba T."/>
            <person name="Matsumura K."/>
            <person name="Nakajima Y."/>
            <person name="Mizuno T."/>
            <person name="Morinaga M."/>
            <person name="Sasaki M."/>
            <person name="Togashi T."/>
            <person name="Oyama M."/>
            <person name="Hata H."/>
            <person name="Watanabe M."/>
            <person name="Komatsu T."/>
            <person name="Mizushima-Sugano J."/>
            <person name="Satoh T."/>
            <person name="Shirai Y."/>
            <person name="Takahashi Y."/>
            <person name="Nakagawa K."/>
            <person name="Okumura K."/>
            <person name="Nagase T."/>
            <person name="Nomura N."/>
            <person name="Kikuchi H."/>
            <person name="Masuho Y."/>
            <person name="Yamashita R."/>
            <person name="Nakai K."/>
            <person name="Yada T."/>
            <person name="Nakamura Y."/>
            <person name="Ohara O."/>
            <person name="Isogai T."/>
            <person name="Sugano S."/>
        </authorList>
    </citation>
    <scope>NUCLEOTIDE SEQUENCE [LARGE SCALE MRNA]</scope>
    <source>
        <tissue>Colon</tissue>
    </source>
</reference>
<reference key="3">
    <citation type="journal article" date="2006" name="Nature">
        <title>The DNA sequence and biological annotation of human chromosome 1.</title>
        <authorList>
            <person name="Gregory S.G."/>
            <person name="Barlow K.F."/>
            <person name="McLay K.E."/>
            <person name="Kaul R."/>
            <person name="Swarbreck D."/>
            <person name="Dunham A."/>
            <person name="Scott C.E."/>
            <person name="Howe K.L."/>
            <person name="Woodfine K."/>
            <person name="Spencer C.C.A."/>
            <person name="Jones M.C."/>
            <person name="Gillson C."/>
            <person name="Searle S."/>
            <person name="Zhou Y."/>
            <person name="Kokocinski F."/>
            <person name="McDonald L."/>
            <person name="Evans R."/>
            <person name="Phillips K."/>
            <person name="Atkinson A."/>
            <person name="Cooper R."/>
            <person name="Jones C."/>
            <person name="Hall R.E."/>
            <person name="Andrews T.D."/>
            <person name="Lloyd C."/>
            <person name="Ainscough R."/>
            <person name="Almeida J.P."/>
            <person name="Ambrose K.D."/>
            <person name="Anderson F."/>
            <person name="Andrew R.W."/>
            <person name="Ashwell R.I.S."/>
            <person name="Aubin K."/>
            <person name="Babbage A.K."/>
            <person name="Bagguley C.L."/>
            <person name="Bailey J."/>
            <person name="Beasley H."/>
            <person name="Bethel G."/>
            <person name="Bird C.P."/>
            <person name="Bray-Allen S."/>
            <person name="Brown J.Y."/>
            <person name="Brown A.J."/>
            <person name="Buckley D."/>
            <person name="Burton J."/>
            <person name="Bye J."/>
            <person name="Carder C."/>
            <person name="Chapman J.C."/>
            <person name="Clark S.Y."/>
            <person name="Clarke G."/>
            <person name="Clee C."/>
            <person name="Cobley V."/>
            <person name="Collier R.E."/>
            <person name="Corby N."/>
            <person name="Coville G.J."/>
            <person name="Davies J."/>
            <person name="Deadman R."/>
            <person name="Dunn M."/>
            <person name="Earthrowl M."/>
            <person name="Ellington A.G."/>
            <person name="Errington H."/>
            <person name="Frankish A."/>
            <person name="Frankland J."/>
            <person name="French L."/>
            <person name="Garner P."/>
            <person name="Garnett J."/>
            <person name="Gay L."/>
            <person name="Ghori M.R.J."/>
            <person name="Gibson R."/>
            <person name="Gilby L.M."/>
            <person name="Gillett W."/>
            <person name="Glithero R.J."/>
            <person name="Grafham D.V."/>
            <person name="Griffiths C."/>
            <person name="Griffiths-Jones S."/>
            <person name="Grocock R."/>
            <person name="Hammond S."/>
            <person name="Harrison E.S.I."/>
            <person name="Hart E."/>
            <person name="Haugen E."/>
            <person name="Heath P.D."/>
            <person name="Holmes S."/>
            <person name="Holt K."/>
            <person name="Howden P.J."/>
            <person name="Hunt A.R."/>
            <person name="Hunt S.E."/>
            <person name="Hunter G."/>
            <person name="Isherwood J."/>
            <person name="James R."/>
            <person name="Johnson C."/>
            <person name="Johnson D."/>
            <person name="Joy A."/>
            <person name="Kay M."/>
            <person name="Kershaw J.K."/>
            <person name="Kibukawa M."/>
            <person name="Kimberley A.M."/>
            <person name="King A."/>
            <person name="Knights A.J."/>
            <person name="Lad H."/>
            <person name="Laird G."/>
            <person name="Lawlor S."/>
            <person name="Leongamornlert D.A."/>
            <person name="Lloyd D.M."/>
            <person name="Loveland J."/>
            <person name="Lovell J."/>
            <person name="Lush M.J."/>
            <person name="Lyne R."/>
            <person name="Martin S."/>
            <person name="Mashreghi-Mohammadi M."/>
            <person name="Matthews L."/>
            <person name="Matthews N.S.W."/>
            <person name="McLaren S."/>
            <person name="Milne S."/>
            <person name="Mistry S."/>
            <person name="Moore M.J.F."/>
            <person name="Nickerson T."/>
            <person name="O'Dell C.N."/>
            <person name="Oliver K."/>
            <person name="Palmeiri A."/>
            <person name="Palmer S.A."/>
            <person name="Parker A."/>
            <person name="Patel D."/>
            <person name="Pearce A.V."/>
            <person name="Peck A.I."/>
            <person name="Pelan S."/>
            <person name="Phelps K."/>
            <person name="Phillimore B.J."/>
            <person name="Plumb R."/>
            <person name="Rajan J."/>
            <person name="Raymond C."/>
            <person name="Rouse G."/>
            <person name="Saenphimmachak C."/>
            <person name="Sehra H.K."/>
            <person name="Sheridan E."/>
            <person name="Shownkeen R."/>
            <person name="Sims S."/>
            <person name="Skuce C.D."/>
            <person name="Smith M."/>
            <person name="Steward C."/>
            <person name="Subramanian S."/>
            <person name="Sycamore N."/>
            <person name="Tracey A."/>
            <person name="Tromans A."/>
            <person name="Van Helmond Z."/>
            <person name="Wall M."/>
            <person name="Wallis J.M."/>
            <person name="White S."/>
            <person name="Whitehead S.L."/>
            <person name="Wilkinson J.E."/>
            <person name="Willey D.L."/>
            <person name="Williams H."/>
            <person name="Wilming L."/>
            <person name="Wray P.W."/>
            <person name="Wu Z."/>
            <person name="Coulson A."/>
            <person name="Vaudin M."/>
            <person name="Sulston J.E."/>
            <person name="Durbin R.M."/>
            <person name="Hubbard T."/>
            <person name="Wooster R."/>
            <person name="Dunham I."/>
            <person name="Carter N.P."/>
            <person name="McVean G."/>
            <person name="Ross M.T."/>
            <person name="Harrow J."/>
            <person name="Olson M.V."/>
            <person name="Beck S."/>
            <person name="Rogers J."/>
            <person name="Bentley D.R."/>
        </authorList>
    </citation>
    <scope>NUCLEOTIDE SEQUENCE [LARGE SCALE GENOMIC DNA]</scope>
</reference>
<reference key="4">
    <citation type="submission" date="2005-09" db="EMBL/GenBank/DDBJ databases">
        <authorList>
            <person name="Mural R.J."/>
            <person name="Istrail S."/>
            <person name="Sutton G.G."/>
            <person name="Florea L."/>
            <person name="Halpern A.L."/>
            <person name="Mobarry C.M."/>
            <person name="Lippert R."/>
            <person name="Walenz B."/>
            <person name="Shatkay H."/>
            <person name="Dew I."/>
            <person name="Miller J.R."/>
            <person name="Flanigan M.J."/>
            <person name="Edwards N.J."/>
            <person name="Bolanos R."/>
            <person name="Fasulo D."/>
            <person name="Halldorsson B.V."/>
            <person name="Hannenhalli S."/>
            <person name="Turner R."/>
            <person name="Yooseph S."/>
            <person name="Lu F."/>
            <person name="Nusskern D.R."/>
            <person name="Shue B.C."/>
            <person name="Zheng X.H."/>
            <person name="Zhong F."/>
            <person name="Delcher A.L."/>
            <person name="Huson D.H."/>
            <person name="Kravitz S.A."/>
            <person name="Mouchard L."/>
            <person name="Reinert K."/>
            <person name="Remington K.A."/>
            <person name="Clark A.G."/>
            <person name="Waterman M.S."/>
            <person name="Eichler E.E."/>
            <person name="Adams M.D."/>
            <person name="Hunkapiller M.W."/>
            <person name="Myers E.W."/>
            <person name="Venter J.C."/>
        </authorList>
    </citation>
    <scope>NUCLEOTIDE SEQUENCE [LARGE SCALE GENOMIC DNA]</scope>
</reference>
<reference key="5">
    <citation type="journal article" date="2004" name="Genome Res.">
        <title>The status, quality, and expansion of the NIH full-length cDNA project: the Mammalian Gene Collection (MGC).</title>
        <authorList>
            <consortium name="The MGC Project Team"/>
        </authorList>
    </citation>
    <scope>NUCLEOTIDE SEQUENCE [LARGE SCALE MRNA]</scope>
    <source>
        <tissue>Uterus</tissue>
    </source>
</reference>
<reference key="6">
    <citation type="journal article" date="2003" name="J. Biol. Chem.">
        <title>Identification of mammalian Mediator subunits with similarities to yeast Mediator subunits Srb5, Srb6, Med11, and Rox3.</title>
        <authorList>
            <person name="Sato S."/>
            <person name="Tomomori-Sato C."/>
            <person name="Banks C.A.S."/>
            <person name="Sorokina I."/>
            <person name="Parmely T.J."/>
            <person name="Kong S.E."/>
            <person name="Jin J."/>
            <person name="Cai Y."/>
            <person name="Lane W.S."/>
            <person name="Brower C.S."/>
            <person name="Conaway R.C."/>
            <person name="Conaway J.W."/>
        </authorList>
    </citation>
    <scope>INTERACTION WITH MED10 AND MED20</scope>
</reference>
<reference key="7">
    <citation type="journal article" date="2004" name="Mol. Cell">
        <title>A set of consensus mammalian mediator subunits identified by multidimensional protein identification technology.</title>
        <authorList>
            <person name="Sato S."/>
            <person name="Tomomori-Sato C."/>
            <person name="Parmely T.J."/>
            <person name="Florens L."/>
            <person name="Zybailov B."/>
            <person name="Swanson S.K."/>
            <person name="Banks C.A.S."/>
            <person name="Jin J."/>
            <person name="Cai Y."/>
            <person name="Washburn M.P."/>
            <person name="Conaway J.W."/>
            <person name="Conaway R.C."/>
        </authorList>
    </citation>
    <scope>IDENTIFICATION BY MASS SPECTROMETRY</scope>
    <scope>IDENTIFICATION IN THE MEDIATOR COMPLEX</scope>
</reference>
<reference key="8">
    <citation type="journal article" date="2005" name="Mol. Cell">
        <title>MED1/TRAP220 exists predominantly in a TRAP/Mediator subpopulation enriched in RNA polymerase II and is required for ER-mediated transcription.</title>
        <authorList>
            <person name="Zhang X."/>
            <person name="Krutchinsky A."/>
            <person name="Fukuda A."/>
            <person name="Chen W."/>
            <person name="Yamamura S."/>
            <person name="Chait B.T."/>
            <person name="Roeder R.G."/>
        </authorList>
    </citation>
    <scope>INTERACTION WITH CCNC; MED1; MED12; MED13; MED17; MED20 AND MED21</scope>
    <scope>IDENTIFICATION BY MASS SPECTROMETRY</scope>
    <scope>IDENTIFICATION IN THE MEDIATOR COMPLEX</scope>
    <scope>ASSOCIATION OF THE MEDIATOR COMPLEX WITH RNA POLYMERASE II</scope>
</reference>
<reference key="9">
    <citation type="journal article" date="2013" name="J. Proteome Res.">
        <title>Toward a comprehensive characterization of a human cancer cell phosphoproteome.</title>
        <authorList>
            <person name="Zhou H."/>
            <person name="Di Palma S."/>
            <person name="Preisinger C."/>
            <person name="Peng M."/>
            <person name="Polat A.N."/>
            <person name="Heck A.J."/>
            <person name="Mohammed S."/>
        </authorList>
    </citation>
    <scope>PHOSPHORYLATION [LARGE SCALE ANALYSIS] AT SER-66</scope>
    <scope>IDENTIFICATION BY MASS SPECTROMETRY [LARGE SCALE ANALYSIS]</scope>
    <source>
        <tissue>Cervix carcinoma</tissue>
        <tissue>Erythroleukemia</tissue>
    </source>
</reference>
<keyword id="KW-0002">3D-structure</keyword>
<keyword id="KW-0010">Activator</keyword>
<keyword id="KW-0539">Nucleus</keyword>
<keyword id="KW-0597">Phosphoprotein</keyword>
<keyword id="KW-1267">Proteomics identification</keyword>
<keyword id="KW-1185">Reference proteome</keyword>
<keyword id="KW-0804">Transcription</keyword>
<keyword id="KW-0805">Transcription regulation</keyword>
<feature type="chain" id="PRO_0000304742" description="Mediator of RNA polymerase II transcription subunit 18">
    <location>
        <begin position="1"/>
        <end position="208"/>
    </location>
</feature>
<feature type="modified residue" description="Phosphoserine" evidence="4">
    <location>
        <position position="66"/>
    </location>
</feature>
<feature type="sequence conflict" description="In Ref. 2; BAA90910." evidence="3" ref="2">
    <original>I</original>
    <variation>T</variation>
    <location>
        <position position="148"/>
    </location>
</feature>
<feature type="strand" evidence="5">
    <location>
        <begin position="18"/>
        <end position="27"/>
    </location>
</feature>
<feature type="helix" evidence="5">
    <location>
        <begin position="29"/>
        <end position="42"/>
    </location>
</feature>
<feature type="strand" evidence="5">
    <location>
        <begin position="51"/>
        <end position="60"/>
    </location>
</feature>
<feature type="strand" evidence="5">
    <location>
        <begin position="63"/>
        <end position="66"/>
    </location>
</feature>
<feature type="strand" evidence="5">
    <location>
        <begin position="68"/>
        <end position="78"/>
    </location>
</feature>
<feature type="strand" evidence="5">
    <location>
        <begin position="83"/>
        <end position="88"/>
    </location>
</feature>
<feature type="strand" evidence="5">
    <location>
        <begin position="94"/>
        <end position="110"/>
    </location>
</feature>
<feature type="helix" evidence="5">
    <location>
        <begin position="114"/>
        <end position="121"/>
    </location>
</feature>
<feature type="strand" evidence="5">
    <location>
        <begin position="124"/>
        <end position="138"/>
    </location>
</feature>
<feature type="strand" evidence="5">
    <location>
        <begin position="141"/>
        <end position="151"/>
    </location>
</feature>
<feature type="strand" evidence="5">
    <location>
        <begin position="157"/>
        <end position="163"/>
    </location>
</feature>
<feature type="strand" evidence="5">
    <location>
        <begin position="165"/>
        <end position="178"/>
    </location>
</feature>
<feature type="helix" evidence="5">
    <location>
        <begin position="183"/>
        <end position="191"/>
    </location>
</feature>
<feature type="turn" evidence="5">
    <location>
        <begin position="192"/>
        <end position="196"/>
    </location>
</feature>
<accession>Q9BUE0</accession>
<accession>D3DPM1</accession>
<accession>Q9NXU9</accession>
<name>MED18_HUMAN</name>
<sequence length="208" mass="23663">MEAPPVTMMPVTGGTINMMEYLLQGSVLDHSLESLIHRLRGLCDNMEPETFLDHEMVFLLKGQQASPFVLRARRSMDRAGAPWHLRYLGQPEMGDKNRHALVRNCVDIATSENLTDFLMEMGFRMDHEFVAKGHLFRKGIMKIMVYKIFRILVPGNTDSTEALSLSYLVELSVVAPAGQDMVSDDMKNFAEQLKPLVHLEKIDPKRLM</sequence>
<comment type="function">
    <text>Component of the Mediator complex, a coactivator involved in the regulated transcription of nearly all RNA polymerase II-dependent genes. Mediator functions as a bridge to convey information from gene-specific regulatory proteins to the basal RNA polymerase II transcription machinery. Mediator is recruited to promoters by direct interactions with regulatory proteins and serves as a scaffold for the assembly of a functional preinitiation complex with RNA polymerase II and the general transcription factors.</text>
</comment>
<comment type="subunit">
    <text evidence="1 2">Component of the Mediator complex, which is composed of MED1, MED4, MED6, MED7, MED8, MED9, MED10, MED11, MED12, MED13, MED13L, MED14, MED15, MED16, MED17, MED18, MED19, MED20, MED21, MED22, MED23, MED24, MED25, MED26, MED27, MED29, MED30, MED31, CCNC, CDK8 and CDC2L6/CDK11. The MED12, MED13, CCNC and CDK8 subunits form a distinct module termed the CDK8 module. Mediator containing the CDK8 module is less active than Mediator lacking this module in supporting transcriptional activation. Individual preparations of the Mediator complex lacking one or more distinct subunits have been variously termed ARC, CRSP, DRIP, PC2, SMCC and TRAP.</text>
</comment>
<comment type="interaction">
    <interactant intactId="EBI-394640">
        <id>Q9BUE0</id>
    </interactant>
    <interactant intactId="EBI-13286382">
        <id>Q63HM1</id>
        <label>AFMID</label>
    </interactant>
    <organismsDiffer>false</organismsDiffer>
    <experiments>3</experiments>
</comment>
<comment type="interaction">
    <interactant intactId="EBI-394640">
        <id>Q9BUE0</id>
    </interactant>
    <interactant intactId="EBI-1058722">
        <id>Q13554</id>
        <label>CAMK2B</label>
    </interactant>
    <organismsDiffer>false</organismsDiffer>
    <experiments>3</experiments>
</comment>
<comment type="interaction">
    <interactant intactId="EBI-394640">
        <id>Q9BUE0</id>
    </interactant>
    <interactant intactId="EBI-10172004">
        <id>Q8IX15-3</id>
        <label>HOMEZ</label>
    </interactant>
    <organismsDiffer>false</organismsDiffer>
    <experiments>3</experiments>
</comment>
<comment type="interaction">
    <interactant intactId="EBI-394640">
        <id>Q9BUE0</id>
    </interactant>
    <interactant intactId="EBI-394562">
        <id>Q9NVC6</id>
        <label>MED17</label>
    </interactant>
    <organismsDiffer>false</organismsDiffer>
    <experiments>7</experiments>
</comment>
<comment type="interaction">
    <interactant intactId="EBI-394640">
        <id>Q9BUE0</id>
    </interactant>
    <interactant intactId="EBI-394644">
        <id>Q9H944</id>
        <label>MED20</label>
    </interactant>
    <organismsDiffer>false</organismsDiffer>
    <experiments>26</experiments>
</comment>
<comment type="interaction">
    <interactant intactId="EBI-394640">
        <id>Q9BUE0</id>
    </interactant>
    <interactant intactId="EBI-394687">
        <id>Q15528</id>
        <label>MED22</label>
    </interactant>
    <organismsDiffer>false</organismsDiffer>
    <experiments>7</experiments>
</comment>
<comment type="interaction">
    <interactant intactId="EBI-394640">
        <id>Q9BUE0</id>
    </interactant>
    <interactant intactId="EBI-394656">
        <id>Q9NX70</id>
        <label>MED29</label>
    </interactant>
    <organismsDiffer>false</organismsDiffer>
    <experiments>12</experiments>
</comment>
<comment type="interaction">
    <interactant intactId="EBI-394640">
        <id>Q9BUE0</id>
    </interactant>
    <interactant intactId="EBI-394624">
        <id>O75586</id>
        <label>MED6</label>
    </interactant>
    <organismsDiffer>false</organismsDiffer>
    <experiments>6</experiments>
</comment>
<comment type="interaction">
    <interactant intactId="EBI-394640">
        <id>Q9BUE0</id>
    </interactant>
    <interactant intactId="EBI-11139477">
        <id>Q96N21</id>
        <label>TEPSIN</label>
    </interactant>
    <organismsDiffer>false</organismsDiffer>
    <experiments>3</experiments>
</comment>
<comment type="interaction">
    <interactant intactId="EBI-394640">
        <id>Q9BUE0</id>
    </interactant>
    <interactant intactId="EBI-739510">
        <id>Q9HCM9</id>
        <label>TRIM39</label>
    </interactant>
    <organismsDiffer>false</organismsDiffer>
    <experiments>3</experiments>
</comment>
<comment type="interaction">
    <interactant intactId="EBI-394640">
        <id>Q9BUE0</id>
    </interactant>
    <interactant intactId="EBI-11523450">
        <id>Q9HCM9-2</id>
        <label>TRIM39</label>
    </interactant>
    <organismsDiffer>false</organismsDiffer>
    <experiments>3</experiments>
</comment>
<comment type="interaction">
    <interactant intactId="EBI-394640">
        <id>Q9BUE0</id>
    </interactant>
    <interactant intactId="EBI-398698">
        <id>Q9R0X0</id>
        <label>Med20</label>
    </interactant>
    <organismsDiffer>true</organismsDiffer>
    <experiments>6</experiments>
</comment>
<comment type="subcellular location">
    <subcellularLocation>
        <location evidence="3">Nucleus</location>
    </subcellularLocation>
</comment>
<comment type="similarity">
    <text evidence="3">Belongs to the Mediator complex subunit 18 family.</text>
</comment>
<gene>
    <name type="primary">MED18</name>
</gene>
<protein>
    <recommendedName>
        <fullName>Mediator of RNA polymerase II transcription subunit 18</fullName>
    </recommendedName>
    <alternativeName>
        <fullName>Mediator complex subunit 18</fullName>
    </alternativeName>
    <alternativeName>
        <fullName>p28b</fullName>
    </alternativeName>
</protein>
<organism>
    <name type="scientific">Homo sapiens</name>
    <name type="common">Human</name>
    <dbReference type="NCBI Taxonomy" id="9606"/>
    <lineage>
        <taxon>Eukaryota</taxon>
        <taxon>Metazoa</taxon>
        <taxon>Chordata</taxon>
        <taxon>Craniata</taxon>
        <taxon>Vertebrata</taxon>
        <taxon>Euteleostomi</taxon>
        <taxon>Mammalia</taxon>
        <taxon>Eutheria</taxon>
        <taxon>Euarchontoglires</taxon>
        <taxon>Primates</taxon>
        <taxon>Haplorrhini</taxon>
        <taxon>Catarrhini</taxon>
        <taxon>Hominidae</taxon>
        <taxon>Homo</taxon>
    </lineage>
</organism>
<dbReference type="EMBL" id="AB107222">
    <property type="protein sequence ID" value="BAD06869.1"/>
    <property type="molecule type" value="mRNA"/>
</dbReference>
<dbReference type="EMBL" id="AK000052">
    <property type="protein sequence ID" value="BAA90910.1"/>
    <property type="molecule type" value="mRNA"/>
</dbReference>
<dbReference type="EMBL" id="AL353622">
    <property type="status" value="NOT_ANNOTATED_CDS"/>
    <property type="molecule type" value="Genomic_DNA"/>
</dbReference>
<dbReference type="EMBL" id="CH471059">
    <property type="protein sequence ID" value="EAX07699.1"/>
    <property type="molecule type" value="Genomic_DNA"/>
</dbReference>
<dbReference type="EMBL" id="CH471059">
    <property type="protein sequence ID" value="EAX07700.1"/>
    <property type="molecule type" value="Genomic_DNA"/>
</dbReference>
<dbReference type="EMBL" id="CH471059">
    <property type="protein sequence ID" value="EAX07702.1"/>
    <property type="molecule type" value="Genomic_DNA"/>
</dbReference>
<dbReference type="EMBL" id="BC002694">
    <property type="protein sequence ID" value="AAH02694.1"/>
    <property type="molecule type" value="mRNA"/>
</dbReference>
<dbReference type="CCDS" id="CCDS322.1"/>
<dbReference type="RefSeq" id="NP_001120822.1">
    <property type="nucleotide sequence ID" value="NM_001127350.2"/>
</dbReference>
<dbReference type="RefSeq" id="NP_060108.2">
    <property type="nucleotide sequence ID" value="NM_017638.3"/>
</dbReference>
<dbReference type="RefSeq" id="XP_005245971.1">
    <property type="nucleotide sequence ID" value="XM_005245914.5"/>
</dbReference>
<dbReference type="RefSeq" id="XP_054188130.1">
    <property type="nucleotide sequence ID" value="XM_054332155.1"/>
</dbReference>
<dbReference type="RefSeq" id="XP_054193179.1">
    <property type="nucleotide sequence ID" value="XM_054337204.1"/>
</dbReference>
<dbReference type="PDB" id="7EMF">
    <property type="method" value="EM"/>
    <property type="resolution" value="3.50 A"/>
    <property type="chains" value="R=1-208"/>
</dbReference>
<dbReference type="PDB" id="7ENA">
    <property type="method" value="EM"/>
    <property type="resolution" value="4.07 A"/>
    <property type="chains" value="r=1-208"/>
</dbReference>
<dbReference type="PDB" id="7ENC">
    <property type="method" value="EM"/>
    <property type="resolution" value="4.13 A"/>
    <property type="chains" value="r=1-208"/>
</dbReference>
<dbReference type="PDB" id="7ENJ">
    <property type="method" value="EM"/>
    <property type="resolution" value="4.40 A"/>
    <property type="chains" value="R=1-208"/>
</dbReference>
<dbReference type="PDB" id="7LBM">
    <property type="method" value="EM"/>
    <property type="resolution" value="4.80 A"/>
    <property type="chains" value="k=1-208"/>
</dbReference>
<dbReference type="PDB" id="7NVR">
    <property type="method" value="EM"/>
    <property type="resolution" value="4.50 A"/>
    <property type="chains" value="e=1-208"/>
</dbReference>
<dbReference type="PDB" id="8GXQ">
    <property type="method" value="EM"/>
    <property type="resolution" value="5.04 A"/>
    <property type="chains" value="r=1-208"/>
</dbReference>
<dbReference type="PDB" id="8GXS">
    <property type="method" value="EM"/>
    <property type="resolution" value="4.16 A"/>
    <property type="chains" value="r=1-208"/>
</dbReference>
<dbReference type="PDB" id="8T9D">
    <property type="method" value="EM"/>
    <property type="resolution" value="4.66 A"/>
    <property type="chains" value="M=1-208"/>
</dbReference>
<dbReference type="PDB" id="8TQW">
    <property type="method" value="EM"/>
    <property type="resolution" value="8.20 A"/>
    <property type="chains" value="R=1-208"/>
</dbReference>
<dbReference type="PDB" id="8TRH">
    <property type="method" value="EM"/>
    <property type="resolution" value="3.70 A"/>
    <property type="chains" value="R=1-208"/>
</dbReference>
<dbReference type="PDBsum" id="7EMF"/>
<dbReference type="PDBsum" id="7ENA"/>
<dbReference type="PDBsum" id="7ENC"/>
<dbReference type="PDBsum" id="7ENJ"/>
<dbReference type="PDBsum" id="7LBM"/>
<dbReference type="PDBsum" id="7NVR"/>
<dbReference type="PDBsum" id="8GXQ"/>
<dbReference type="PDBsum" id="8GXS"/>
<dbReference type="PDBsum" id="8T9D"/>
<dbReference type="PDBsum" id="8TQW"/>
<dbReference type="PDBsum" id="8TRH"/>
<dbReference type="EMDB" id="EMD-12610"/>
<dbReference type="EMDB" id="EMD-23255"/>
<dbReference type="EMDB" id="EMD-31191"/>
<dbReference type="EMDB" id="EMD-31204"/>
<dbReference type="EMDB" id="EMD-31207"/>
<dbReference type="EMDB" id="EMD-31211"/>
<dbReference type="EMDB" id="EMD-34359"/>
<dbReference type="EMDB" id="EMD-34360"/>
<dbReference type="EMDB" id="EMD-41107"/>
<dbReference type="EMDB" id="EMD-41565"/>
<dbReference type="EMDB" id="EMD-41580"/>
<dbReference type="SMR" id="Q9BUE0"/>
<dbReference type="BioGRID" id="120156">
    <property type="interactions" value="78"/>
</dbReference>
<dbReference type="ComplexPortal" id="CPX-3227">
    <property type="entry name" value="Core mediator complex"/>
</dbReference>
<dbReference type="CORUM" id="Q9BUE0"/>
<dbReference type="FunCoup" id="Q9BUE0">
    <property type="interactions" value="2421"/>
</dbReference>
<dbReference type="IntAct" id="Q9BUE0">
    <property type="interactions" value="75"/>
</dbReference>
<dbReference type="MINT" id="Q9BUE0"/>
<dbReference type="STRING" id="9606.ENSP00000362948"/>
<dbReference type="GlyGen" id="Q9BUE0">
    <property type="glycosylation" value="1 site, 1 O-linked glycan (1 site)"/>
</dbReference>
<dbReference type="iPTMnet" id="Q9BUE0"/>
<dbReference type="MetOSite" id="Q9BUE0"/>
<dbReference type="PhosphoSitePlus" id="Q9BUE0"/>
<dbReference type="BioMuta" id="MED18"/>
<dbReference type="DMDM" id="74752353"/>
<dbReference type="jPOST" id="Q9BUE0"/>
<dbReference type="MassIVE" id="Q9BUE0"/>
<dbReference type="PaxDb" id="9606-ENSP00000362948"/>
<dbReference type="PeptideAtlas" id="Q9BUE0"/>
<dbReference type="ProteomicsDB" id="79079"/>
<dbReference type="Pumba" id="Q9BUE0"/>
<dbReference type="Antibodypedia" id="30928">
    <property type="antibodies" value="223 antibodies from 25 providers"/>
</dbReference>
<dbReference type="DNASU" id="54797"/>
<dbReference type="Ensembl" id="ENST00000373842.9">
    <property type="protein sequence ID" value="ENSP00000362948.4"/>
    <property type="gene ID" value="ENSG00000130772.14"/>
</dbReference>
<dbReference type="Ensembl" id="ENST00000398997.2">
    <property type="protein sequence ID" value="ENSP00000381963.2"/>
    <property type="gene ID" value="ENSG00000130772.14"/>
</dbReference>
<dbReference type="Ensembl" id="ENST00000645794.2">
    <property type="protein sequence ID" value="ENSP00000494184.1"/>
    <property type="gene ID" value="ENSG00000284944.2"/>
</dbReference>
<dbReference type="Ensembl" id="ENST00000647352.1">
    <property type="protein sequence ID" value="ENSP00000494048.1"/>
    <property type="gene ID" value="ENSG00000284944.2"/>
</dbReference>
<dbReference type="GeneID" id="54797"/>
<dbReference type="KEGG" id="hsa:54797"/>
<dbReference type="MANE-Select" id="ENST00000373842.9">
    <property type="protein sequence ID" value="ENSP00000362948.4"/>
    <property type="RefSeq nucleotide sequence ID" value="NM_017638.3"/>
    <property type="RefSeq protein sequence ID" value="NP_060108.2"/>
</dbReference>
<dbReference type="UCSC" id="uc001bpt.5">
    <property type="organism name" value="human"/>
</dbReference>
<dbReference type="AGR" id="HGNC:25944"/>
<dbReference type="CTD" id="54797"/>
<dbReference type="DisGeNET" id="54797"/>
<dbReference type="GeneCards" id="MED18"/>
<dbReference type="HGNC" id="HGNC:25944">
    <property type="gene designation" value="MED18"/>
</dbReference>
<dbReference type="HPA" id="ENSG00000130772">
    <property type="expression patterns" value="Low tissue specificity"/>
</dbReference>
<dbReference type="MIM" id="612384">
    <property type="type" value="gene"/>
</dbReference>
<dbReference type="neXtProt" id="NX_Q9BUE0"/>
<dbReference type="OpenTargets" id="ENSG00000130772"/>
<dbReference type="PharmGKB" id="PA134884523"/>
<dbReference type="VEuPathDB" id="HostDB:ENSG00000130772"/>
<dbReference type="eggNOG" id="KOG3264">
    <property type="taxonomic scope" value="Eukaryota"/>
</dbReference>
<dbReference type="GeneTree" id="ENSGT00390000003312"/>
<dbReference type="HOGENOM" id="CLU_084570_0_0_1"/>
<dbReference type="InParanoid" id="Q9BUE0"/>
<dbReference type="OMA" id="ARGYMFR"/>
<dbReference type="OrthoDB" id="10018982at2759"/>
<dbReference type="PAN-GO" id="Q9BUE0">
    <property type="GO annotations" value="5 GO annotations based on evolutionary models"/>
</dbReference>
<dbReference type="PhylomeDB" id="Q9BUE0"/>
<dbReference type="TreeFam" id="TF313246"/>
<dbReference type="PathwayCommons" id="Q9BUE0"/>
<dbReference type="Reactome" id="R-HSA-1989781">
    <property type="pathway name" value="PPARA activates gene expression"/>
</dbReference>
<dbReference type="Reactome" id="R-HSA-381340">
    <property type="pathway name" value="Transcriptional regulation of white adipocyte differentiation"/>
</dbReference>
<dbReference type="Reactome" id="R-HSA-9833110">
    <property type="pathway name" value="RSV-host interactions"/>
</dbReference>
<dbReference type="SignaLink" id="Q9BUE0"/>
<dbReference type="SIGNOR" id="Q9BUE0"/>
<dbReference type="BioGRID-ORCS" id="54797">
    <property type="hits" value="660 hits in 1173 CRISPR screens"/>
</dbReference>
<dbReference type="GenomeRNAi" id="54797"/>
<dbReference type="Pharos" id="Q9BUE0">
    <property type="development level" value="Tbio"/>
</dbReference>
<dbReference type="PRO" id="PR:Q9BUE0"/>
<dbReference type="Proteomes" id="UP000005640">
    <property type="component" value="Chromosome 1"/>
</dbReference>
<dbReference type="RNAct" id="Q9BUE0">
    <property type="molecule type" value="protein"/>
</dbReference>
<dbReference type="Bgee" id="ENSG00000130772">
    <property type="expression patterns" value="Expressed in mucosa of transverse colon and 108 other cell types or tissues"/>
</dbReference>
<dbReference type="GO" id="GO:0070847">
    <property type="term" value="C:core mediator complex"/>
    <property type="evidence" value="ECO:0000353"/>
    <property type="project" value="ComplexPortal"/>
</dbReference>
<dbReference type="GO" id="GO:0016592">
    <property type="term" value="C:mediator complex"/>
    <property type="evidence" value="ECO:0000314"/>
    <property type="project" value="MGI"/>
</dbReference>
<dbReference type="GO" id="GO:0005654">
    <property type="term" value="C:nucleoplasm"/>
    <property type="evidence" value="ECO:0000304"/>
    <property type="project" value="Reactome"/>
</dbReference>
<dbReference type="GO" id="GO:0005634">
    <property type="term" value="C:nucleus"/>
    <property type="evidence" value="ECO:0000314"/>
    <property type="project" value="ComplexPortal"/>
</dbReference>
<dbReference type="GO" id="GO:0003712">
    <property type="term" value="F:transcription coregulator activity"/>
    <property type="evidence" value="ECO:0000318"/>
    <property type="project" value="GO_Central"/>
</dbReference>
<dbReference type="GO" id="GO:0032968">
    <property type="term" value="P:positive regulation of transcription elongation by RNA polymerase II"/>
    <property type="evidence" value="ECO:0000303"/>
    <property type="project" value="ComplexPortal"/>
</dbReference>
<dbReference type="GO" id="GO:0060261">
    <property type="term" value="P:positive regulation of transcription initiation by RNA polymerase II"/>
    <property type="evidence" value="ECO:0000318"/>
    <property type="project" value="GO_Central"/>
</dbReference>
<dbReference type="GO" id="GO:0051123">
    <property type="term" value="P:RNA polymerase II preinitiation complex assembly"/>
    <property type="evidence" value="ECO:0000303"/>
    <property type="project" value="ComplexPortal"/>
</dbReference>
<dbReference type="FunFam" id="2.40.320.10:FF:000001">
    <property type="entry name" value="Mediator of RNA polymerase II transcription subunit 18"/>
    <property type="match status" value="1"/>
</dbReference>
<dbReference type="Gene3D" id="2.40.320.10">
    <property type="entry name" value="Hypothetical Protein Pfu-838710-001"/>
    <property type="match status" value="1"/>
</dbReference>
<dbReference type="InterPro" id="IPR019095">
    <property type="entry name" value="Mediator_Med18"/>
</dbReference>
<dbReference type="PANTHER" id="PTHR13321:SF2">
    <property type="entry name" value="MEDIATOR OF RNA POLYMERASE II TRANSCRIPTION SUBUNIT 18"/>
    <property type="match status" value="1"/>
</dbReference>
<dbReference type="PANTHER" id="PTHR13321">
    <property type="entry name" value="MEDIATOR OF RNA POLYMERASE II TRANSCRIPTION, SUBUNIT 18"/>
    <property type="match status" value="1"/>
</dbReference>
<dbReference type="Pfam" id="PF09637">
    <property type="entry name" value="Med18"/>
    <property type="match status" value="1"/>
</dbReference>
<evidence type="ECO:0000269" key="1">
    <source>
    </source>
</evidence>
<evidence type="ECO:0000269" key="2">
    <source>
    </source>
</evidence>
<evidence type="ECO:0000305" key="3"/>
<evidence type="ECO:0007744" key="4">
    <source>
    </source>
</evidence>
<evidence type="ECO:0007829" key="5">
    <source>
        <dbReference type="PDB" id="7EMF"/>
    </source>
</evidence>
<proteinExistence type="evidence at protein level"/>